<dbReference type="EC" id="2.1.1.-"/>
<dbReference type="EMBL" id="AE010299">
    <property type="protein sequence ID" value="AAM05210.1"/>
    <property type="status" value="ALT_INIT"/>
    <property type="molecule type" value="Genomic_DNA"/>
</dbReference>
<dbReference type="RefSeq" id="WP_011021807.1">
    <property type="nucleotide sequence ID" value="NC_003552.1"/>
</dbReference>
<dbReference type="SMR" id="Q8TPV0"/>
<dbReference type="STRING" id="188937.MA_1804"/>
<dbReference type="EnsemblBacteria" id="AAM05210">
    <property type="protein sequence ID" value="AAM05210"/>
    <property type="gene ID" value="MA_1804"/>
</dbReference>
<dbReference type="GeneID" id="1473693"/>
<dbReference type="KEGG" id="mac:MA_1804"/>
<dbReference type="HOGENOM" id="CLU_048697_0_0_2"/>
<dbReference type="InParanoid" id="Q8TPV0"/>
<dbReference type="OrthoDB" id="18811at2157"/>
<dbReference type="PhylomeDB" id="Q8TPV0"/>
<dbReference type="Proteomes" id="UP000002487">
    <property type="component" value="Chromosome"/>
</dbReference>
<dbReference type="GO" id="GO:0008168">
    <property type="term" value="F:methyltransferase activity"/>
    <property type="evidence" value="ECO:0007669"/>
    <property type="project" value="UniProtKB-KW"/>
</dbReference>
<dbReference type="GO" id="GO:0032259">
    <property type="term" value="P:methylation"/>
    <property type="evidence" value="ECO:0007669"/>
    <property type="project" value="UniProtKB-KW"/>
</dbReference>
<dbReference type="GO" id="GO:0006730">
    <property type="term" value="P:one-carbon metabolic process"/>
    <property type="evidence" value="ECO:0007669"/>
    <property type="project" value="InterPro"/>
</dbReference>
<dbReference type="InterPro" id="IPR011005">
    <property type="entry name" value="Dihydropteroate_synth-like_sf"/>
</dbReference>
<dbReference type="InterPro" id="IPR023467">
    <property type="entry name" value="MeTrfase_MtrH/MtxH"/>
</dbReference>
<dbReference type="InterPro" id="IPR028342">
    <property type="entry name" value="MtrH"/>
</dbReference>
<dbReference type="NCBIfam" id="TIGR01114">
    <property type="entry name" value="mtrH"/>
    <property type="match status" value="1"/>
</dbReference>
<dbReference type="Pfam" id="PF02007">
    <property type="entry name" value="MtrH"/>
    <property type="match status" value="1"/>
</dbReference>
<dbReference type="PIRSF" id="PIRSF500206">
    <property type="entry name" value="MtrH"/>
    <property type="match status" value="1"/>
</dbReference>
<dbReference type="PIRSF" id="PIRSF004960">
    <property type="entry name" value="MtrH_MtxH"/>
    <property type="match status" value="1"/>
</dbReference>
<dbReference type="SUPFAM" id="SSF51717">
    <property type="entry name" value="Dihydropteroate synthetase-like"/>
    <property type="match status" value="1"/>
</dbReference>
<name>MTXH_METAC</name>
<reference key="1">
    <citation type="journal article" date="2002" name="Genome Res.">
        <title>The genome of Methanosarcina acetivorans reveals extensive metabolic and physiological diversity.</title>
        <authorList>
            <person name="Galagan J.E."/>
            <person name="Nusbaum C."/>
            <person name="Roy A."/>
            <person name="Endrizzi M.G."/>
            <person name="Macdonald P."/>
            <person name="FitzHugh W."/>
            <person name="Calvo S."/>
            <person name="Engels R."/>
            <person name="Smirnov S."/>
            <person name="Atnoor D."/>
            <person name="Brown A."/>
            <person name="Allen N."/>
            <person name="Naylor J."/>
            <person name="Stange-Thomann N."/>
            <person name="DeArellano K."/>
            <person name="Johnson R."/>
            <person name="Linton L."/>
            <person name="McEwan P."/>
            <person name="McKernan K."/>
            <person name="Talamas J."/>
            <person name="Tirrell A."/>
            <person name="Ye W."/>
            <person name="Zimmer A."/>
            <person name="Barber R.D."/>
            <person name="Cann I."/>
            <person name="Graham D.E."/>
            <person name="Grahame D.A."/>
            <person name="Guss A.M."/>
            <person name="Hedderich R."/>
            <person name="Ingram-Smith C."/>
            <person name="Kuettner H.C."/>
            <person name="Krzycki J.A."/>
            <person name="Leigh J.A."/>
            <person name="Li W."/>
            <person name="Liu J."/>
            <person name="Mukhopadhyay B."/>
            <person name="Reeve J.N."/>
            <person name="Smith K."/>
            <person name="Springer T.A."/>
            <person name="Umayam L.A."/>
            <person name="White O."/>
            <person name="White R.H."/>
            <person name="de Macario E.C."/>
            <person name="Ferry J.G."/>
            <person name="Jarrell K.F."/>
            <person name="Jing H."/>
            <person name="Macario A.J.L."/>
            <person name="Paulsen I.T."/>
            <person name="Pritchett M."/>
            <person name="Sowers K.R."/>
            <person name="Swanson R.V."/>
            <person name="Zinder S.H."/>
            <person name="Lander E."/>
            <person name="Metcalf W.W."/>
            <person name="Birren B."/>
        </authorList>
    </citation>
    <scope>NUCLEOTIDE SEQUENCE [LARGE SCALE GENOMIC DNA]</scope>
    <source>
        <strain>ATCC 35395 / DSM 2834 / JCM 12185 / C2A</strain>
    </source>
</reference>
<feature type="chain" id="PRO_0000147569" description="Putative methyltransferase mtx subunit H">
    <location>
        <begin position="1"/>
        <end position="310"/>
    </location>
</feature>
<comment type="subunit">
    <text evidence="1">May be part of a complex composed of 3 subunits; MtxA, MtxH and MtxX.</text>
</comment>
<comment type="similarity">
    <text evidence="2">Belongs to the MtrH family.</text>
</comment>
<comment type="sequence caution" evidence="2">
    <conflict type="erroneous initiation">
        <sequence resource="EMBL-CDS" id="AAM05210"/>
    </conflict>
</comment>
<evidence type="ECO:0000250" key="1"/>
<evidence type="ECO:0000305" key="2"/>
<gene>
    <name type="primary">mtxH</name>
    <name type="ordered locus">MA_1804</name>
</gene>
<sequence>MFKFQKEQEIANIAGIKVGGQPGELPTLLAGTIFYNKHEIVEDAAKGLFDRIAAEKLVNLQEVGSDMTGNPHMVHIFGTTQESITRYIDFIAEVSESPFLIDSPEGTVRAHASRYVSEIGLADRAVYNSINMSITTSEIEALAQSDIDSSIILGFNAMDSSLRGRMEMLETGAGLLEEGLLSIADRCGIVNKLIDPSITPMGNGAGIALRMTITAKAKWGYPTGSGIHNAPSAWNWLNRQKEKNPVLYKICDVGSTCLQQAAAGDFILYGPIEYAQYVFPMAAMSDIMIAEAVADLDIEPASRHPINLLV</sequence>
<keyword id="KW-0489">Methyltransferase</keyword>
<keyword id="KW-1185">Reference proteome</keyword>
<keyword id="KW-0808">Transferase</keyword>
<organism>
    <name type="scientific">Methanosarcina acetivorans (strain ATCC 35395 / DSM 2834 / JCM 12185 / C2A)</name>
    <dbReference type="NCBI Taxonomy" id="188937"/>
    <lineage>
        <taxon>Archaea</taxon>
        <taxon>Methanobacteriati</taxon>
        <taxon>Methanobacteriota</taxon>
        <taxon>Stenosarchaea group</taxon>
        <taxon>Methanomicrobia</taxon>
        <taxon>Methanosarcinales</taxon>
        <taxon>Methanosarcinaceae</taxon>
        <taxon>Methanosarcina</taxon>
    </lineage>
</organism>
<accession>Q8TPV0</accession>
<proteinExistence type="inferred from homology"/>
<protein>
    <recommendedName>
        <fullName>Putative methyltransferase mtx subunit H</fullName>
        <ecNumber>2.1.1.-</ecNumber>
    </recommendedName>
</protein>